<gene>
    <name evidence="13" type="primary">RASAL1</name>
    <name evidence="10" type="synonym">RASAL</name>
</gene>
<comment type="function">
    <text evidence="6 7">Probable inhibitory regulator of the Ras-cyclic AMP pathway (PubMed:9751798). Plays a role in dendrite formation by melanocytes (PubMed:23999003).</text>
</comment>
<comment type="cofactor">
    <cofactor evidence="1">
        <name>Ca(2+)</name>
        <dbReference type="ChEBI" id="CHEBI:29108"/>
    </cofactor>
</comment>
<comment type="alternative products">
    <event type="alternative splicing"/>
    <isoform>
        <id>O95294-1</id>
        <name>1</name>
        <sequence type="displayed"/>
    </isoform>
    <isoform>
        <id>O95294-2</id>
        <name>2</name>
        <sequence type="described" ref="VSP_001627"/>
    </isoform>
    <isoform>
        <id>O95294-3</id>
        <name>3</name>
        <sequence type="described" ref="VSP_047005 VSP_047006"/>
    </isoform>
    <isoform>
        <id>O95294-4</id>
        <name>4</name>
        <sequence type="described" ref="VSP_047006"/>
    </isoform>
</comment>
<comment type="tissue specificity">
    <text evidence="6 7">Highly expressed in thyroid and adrenal medulla, lower expression in brain, spinal cord and trachea (PubMed:9751798). Expressed in melanocytes (PubMed:23999003).</text>
</comment>
<comment type="sequence caution" evidence="12">
    <conflict type="erroneous initiation">
        <sequence resource="EMBL-CDS" id="BAD92172"/>
    </conflict>
    <text>Extended N-terminus.</text>
</comment>
<dbReference type="EMBL" id="AF086713">
    <property type="protein sequence ID" value="AAD09006.1"/>
    <property type="molecule type" value="mRNA"/>
</dbReference>
<dbReference type="EMBL" id="AB208935">
    <property type="protein sequence ID" value="BAD92172.1"/>
    <property type="status" value="ALT_INIT"/>
    <property type="molecule type" value="mRNA"/>
</dbReference>
<dbReference type="EMBL" id="AC089999">
    <property type="status" value="NOT_ANNOTATED_CDS"/>
    <property type="molecule type" value="Genomic_DNA"/>
</dbReference>
<dbReference type="EMBL" id="BC014420">
    <property type="protein sequence ID" value="AAH14420.1"/>
    <property type="molecule type" value="mRNA"/>
</dbReference>
<dbReference type="EMBL" id="BC093724">
    <property type="protein sequence ID" value="AAH93724.1"/>
    <property type="molecule type" value="mRNA"/>
</dbReference>
<dbReference type="EMBL" id="BC143261">
    <property type="protein sequence ID" value="AAI43262.1"/>
    <property type="molecule type" value="mRNA"/>
</dbReference>
<dbReference type="EMBL" id="AL136672">
    <property type="protein sequence ID" value="CAB66607.2"/>
    <property type="molecule type" value="Transcribed_RNA"/>
</dbReference>
<dbReference type="CCDS" id="CCDS55888.1">
    <molecule id="O95294-2"/>
</dbReference>
<dbReference type="CCDS" id="CCDS55889.1">
    <molecule id="O95294-3"/>
</dbReference>
<dbReference type="CCDS" id="CCDS73529.1">
    <molecule id="O95294-4"/>
</dbReference>
<dbReference type="CCDS" id="CCDS9165.1">
    <molecule id="O95294-1"/>
</dbReference>
<dbReference type="RefSeq" id="NP_001180449.1">
    <molecule id="O95294-3"/>
    <property type="nucleotide sequence ID" value="NM_001193520.2"/>
</dbReference>
<dbReference type="RefSeq" id="NP_001180450.1">
    <molecule id="O95294-2"/>
    <property type="nucleotide sequence ID" value="NM_001193521.3"/>
</dbReference>
<dbReference type="RefSeq" id="NP_001288131.1">
    <molecule id="O95294-4"/>
    <property type="nucleotide sequence ID" value="NM_001301202.2"/>
</dbReference>
<dbReference type="RefSeq" id="NP_001381010.1">
    <molecule id="O95294-3"/>
    <property type="nucleotide sequence ID" value="NM_001394081.1"/>
</dbReference>
<dbReference type="RefSeq" id="NP_001381011.1">
    <molecule id="O95294-4"/>
    <property type="nucleotide sequence ID" value="NM_001394082.1"/>
</dbReference>
<dbReference type="RefSeq" id="NP_001381012.1">
    <molecule id="O95294-4"/>
    <property type="nucleotide sequence ID" value="NM_001394083.1"/>
</dbReference>
<dbReference type="RefSeq" id="NP_001381013.1">
    <molecule id="O95294-4"/>
    <property type="nucleotide sequence ID" value="NM_001394084.1"/>
</dbReference>
<dbReference type="RefSeq" id="NP_001381014.1">
    <molecule id="O95294-1"/>
    <property type="nucleotide sequence ID" value="NM_001394085.1"/>
</dbReference>
<dbReference type="RefSeq" id="NP_004649.2">
    <molecule id="O95294-1"/>
    <property type="nucleotide sequence ID" value="NM_004658.3"/>
</dbReference>
<dbReference type="RefSeq" id="XP_005254007.1">
    <molecule id="O95294-3"/>
    <property type="nucleotide sequence ID" value="XM_005253950.5"/>
</dbReference>
<dbReference type="RefSeq" id="XP_006719704.1">
    <molecule id="O95294-3"/>
    <property type="nucleotide sequence ID" value="XM_006719641.4"/>
</dbReference>
<dbReference type="RefSeq" id="XP_011537154.1">
    <property type="nucleotide sequence ID" value="XM_011538852.2"/>
</dbReference>
<dbReference type="RefSeq" id="XP_011537155.1">
    <property type="nucleotide sequence ID" value="XM_011538853.2"/>
</dbReference>
<dbReference type="RefSeq" id="XP_016875517.1">
    <property type="nucleotide sequence ID" value="XM_017020028.1"/>
</dbReference>
<dbReference type="RefSeq" id="XP_047285632.1">
    <molecule id="O95294-3"/>
    <property type="nucleotide sequence ID" value="XM_047429676.1"/>
</dbReference>
<dbReference type="SMR" id="O95294"/>
<dbReference type="BioGRID" id="114017">
    <property type="interactions" value="7"/>
</dbReference>
<dbReference type="FunCoup" id="O95294">
    <property type="interactions" value="551"/>
</dbReference>
<dbReference type="IntAct" id="O95294">
    <property type="interactions" value="1"/>
</dbReference>
<dbReference type="STRING" id="9606.ENSP00000450244"/>
<dbReference type="iPTMnet" id="O95294"/>
<dbReference type="PhosphoSitePlus" id="O95294"/>
<dbReference type="SwissPalm" id="O95294"/>
<dbReference type="BioMuta" id="RASAL1"/>
<dbReference type="jPOST" id="O95294"/>
<dbReference type="MassIVE" id="O95294"/>
<dbReference type="PaxDb" id="9606-ENSP00000450244"/>
<dbReference type="PeptideAtlas" id="O95294"/>
<dbReference type="ProteomicsDB" id="28360"/>
<dbReference type="ProteomicsDB" id="50790">
    <molecule id="O95294-1"/>
</dbReference>
<dbReference type="ProteomicsDB" id="50791">
    <molecule id="O95294-2"/>
</dbReference>
<dbReference type="Antibodypedia" id="31222">
    <property type="antibodies" value="230 antibodies from 31 providers"/>
</dbReference>
<dbReference type="DNASU" id="8437"/>
<dbReference type="Ensembl" id="ENST00000261729.9">
    <molecule id="O95294-1"/>
    <property type="protein sequence ID" value="ENSP00000261729.5"/>
    <property type="gene ID" value="ENSG00000111344.12"/>
</dbReference>
<dbReference type="Ensembl" id="ENST00000446861.7">
    <molecule id="O95294-2"/>
    <property type="protein sequence ID" value="ENSP00000395920.3"/>
    <property type="gene ID" value="ENSG00000111344.12"/>
</dbReference>
<dbReference type="Ensembl" id="ENST00000546530.5">
    <molecule id="O95294-3"/>
    <property type="protein sequence ID" value="ENSP00000450244.1"/>
    <property type="gene ID" value="ENSG00000111344.12"/>
</dbReference>
<dbReference type="Ensembl" id="ENST00000548055.2">
    <molecule id="O95294-4"/>
    <property type="protein sequence ID" value="ENSP00000448510.1"/>
    <property type="gene ID" value="ENSG00000111344.12"/>
</dbReference>
<dbReference type="GeneID" id="8437"/>
<dbReference type="KEGG" id="hsa:8437"/>
<dbReference type="MANE-Select" id="ENST00000548055.2">
    <molecule id="O95294-4"/>
    <property type="protein sequence ID" value="ENSP00000448510.1"/>
    <property type="RefSeq nucleotide sequence ID" value="NM_001301202.2"/>
    <property type="RefSeq protein sequence ID" value="NP_001288131.1"/>
</dbReference>
<dbReference type="UCSC" id="uc001tul.4">
    <molecule id="O95294-1"/>
    <property type="organism name" value="human"/>
</dbReference>
<dbReference type="AGR" id="HGNC:9873"/>
<dbReference type="CTD" id="8437"/>
<dbReference type="DisGeNET" id="8437"/>
<dbReference type="GeneCards" id="RASAL1"/>
<dbReference type="HGNC" id="HGNC:9873">
    <property type="gene designation" value="RASAL1"/>
</dbReference>
<dbReference type="HPA" id="ENSG00000111344">
    <property type="expression patterns" value="Tissue enhanced (parathyroid gland, salivary gland)"/>
</dbReference>
<dbReference type="MalaCards" id="RASAL1"/>
<dbReference type="MIM" id="604118">
    <property type="type" value="gene"/>
</dbReference>
<dbReference type="neXtProt" id="NX_O95294"/>
<dbReference type="OpenTargets" id="ENSG00000111344"/>
<dbReference type="PharmGKB" id="PA34234"/>
<dbReference type="VEuPathDB" id="HostDB:ENSG00000111344"/>
<dbReference type="eggNOG" id="KOG2059">
    <property type="taxonomic scope" value="Eukaryota"/>
</dbReference>
<dbReference type="GeneTree" id="ENSGT00940000158715"/>
<dbReference type="HOGENOM" id="CLU_008096_0_0_1"/>
<dbReference type="InParanoid" id="O95294"/>
<dbReference type="OMA" id="MEGACTD"/>
<dbReference type="OrthoDB" id="1562946at2759"/>
<dbReference type="PAN-GO" id="O95294">
    <property type="GO annotations" value="0 GO annotations based on evolutionary models"/>
</dbReference>
<dbReference type="PhylomeDB" id="O95294"/>
<dbReference type="TreeFam" id="TF105302"/>
<dbReference type="PathwayCommons" id="O95294"/>
<dbReference type="Reactome" id="R-HSA-5658442">
    <property type="pathway name" value="Regulation of RAS by GAPs"/>
</dbReference>
<dbReference type="BioGRID-ORCS" id="8437">
    <property type="hits" value="10 hits in 1136 CRISPR screens"/>
</dbReference>
<dbReference type="CD-CODE" id="FB4E32DD">
    <property type="entry name" value="Presynaptic clusters and postsynaptic densities"/>
</dbReference>
<dbReference type="ChiTaRS" id="RASAL1">
    <property type="organism name" value="human"/>
</dbReference>
<dbReference type="GenomeRNAi" id="8437"/>
<dbReference type="Pharos" id="O95294">
    <property type="development level" value="Tbio"/>
</dbReference>
<dbReference type="PRO" id="PR:O95294"/>
<dbReference type="Proteomes" id="UP000005640">
    <property type="component" value="Chromosome 12"/>
</dbReference>
<dbReference type="RNAct" id="O95294">
    <property type="molecule type" value="protein"/>
</dbReference>
<dbReference type="Bgee" id="ENSG00000111344">
    <property type="expression patterns" value="Expressed in lower esophagus mucosa and 140 other cell types or tissues"/>
</dbReference>
<dbReference type="GO" id="GO:0005829">
    <property type="term" value="C:cytosol"/>
    <property type="evidence" value="ECO:0000314"/>
    <property type="project" value="UniProtKB"/>
</dbReference>
<dbReference type="GO" id="GO:0005096">
    <property type="term" value="F:GTPase activator activity"/>
    <property type="evidence" value="ECO:0000304"/>
    <property type="project" value="ProtInc"/>
</dbReference>
<dbReference type="GO" id="GO:0005543">
    <property type="term" value="F:phospholipid binding"/>
    <property type="evidence" value="ECO:0000304"/>
    <property type="project" value="ProtInc"/>
</dbReference>
<dbReference type="GO" id="GO:0008270">
    <property type="term" value="F:zinc ion binding"/>
    <property type="evidence" value="ECO:0007669"/>
    <property type="project" value="UniProtKB-KW"/>
</dbReference>
<dbReference type="GO" id="GO:0030154">
    <property type="term" value="P:cell differentiation"/>
    <property type="evidence" value="ECO:0007669"/>
    <property type="project" value="UniProtKB-KW"/>
</dbReference>
<dbReference type="GO" id="GO:0071277">
    <property type="term" value="P:cellular response to calcium ion"/>
    <property type="evidence" value="ECO:0007669"/>
    <property type="project" value="InterPro"/>
</dbReference>
<dbReference type="GO" id="GO:0035556">
    <property type="term" value="P:intracellular signal transduction"/>
    <property type="evidence" value="ECO:0007669"/>
    <property type="project" value="InterPro"/>
</dbReference>
<dbReference type="GO" id="GO:0046580">
    <property type="term" value="P:negative regulation of Ras protein signal transduction"/>
    <property type="evidence" value="ECO:0007669"/>
    <property type="project" value="InterPro"/>
</dbReference>
<dbReference type="GO" id="GO:1903861">
    <property type="term" value="P:positive regulation of dendrite extension"/>
    <property type="evidence" value="ECO:0000314"/>
    <property type="project" value="UniProtKB"/>
</dbReference>
<dbReference type="GO" id="GO:0007165">
    <property type="term" value="P:signal transduction"/>
    <property type="evidence" value="ECO:0000304"/>
    <property type="project" value="ProtInc"/>
</dbReference>
<dbReference type="CDD" id="cd05135">
    <property type="entry name" value="RasGAP_RASAL"/>
    <property type="match status" value="1"/>
</dbReference>
<dbReference type="FunFam" id="1.10.506.10:FF:000020">
    <property type="entry name" value="Ras GTPase-activating protein 4 isoform 1"/>
    <property type="match status" value="1"/>
</dbReference>
<dbReference type="FunFam" id="2.30.29.30:FF:000283">
    <property type="entry name" value="Ras GTPase-activating protein 4 isoform 1"/>
    <property type="match status" value="1"/>
</dbReference>
<dbReference type="FunFam" id="2.60.40.150:FF:000150">
    <property type="entry name" value="RAS protein activator like 1"/>
    <property type="match status" value="1"/>
</dbReference>
<dbReference type="Gene3D" id="2.60.40.150">
    <property type="entry name" value="C2 domain"/>
    <property type="match status" value="2"/>
</dbReference>
<dbReference type="Gene3D" id="1.10.506.10">
    <property type="entry name" value="GTPase Activation - p120gap, domain 1"/>
    <property type="match status" value="1"/>
</dbReference>
<dbReference type="Gene3D" id="2.30.29.30">
    <property type="entry name" value="Pleckstrin-homology domain (PH domain)/Phosphotyrosine-binding domain (PTB)"/>
    <property type="match status" value="1"/>
</dbReference>
<dbReference type="InterPro" id="IPR000008">
    <property type="entry name" value="C2_dom"/>
</dbReference>
<dbReference type="InterPro" id="IPR035892">
    <property type="entry name" value="C2_domain_sf"/>
</dbReference>
<dbReference type="InterPro" id="IPR011993">
    <property type="entry name" value="PH-like_dom_sf"/>
</dbReference>
<dbReference type="InterPro" id="IPR001849">
    <property type="entry name" value="PH_domain"/>
</dbReference>
<dbReference type="InterPro" id="IPR039360">
    <property type="entry name" value="Ras_GTPase"/>
</dbReference>
<dbReference type="InterPro" id="IPR037776">
    <property type="entry name" value="RASAL_RasGAP"/>
</dbReference>
<dbReference type="InterPro" id="IPR023152">
    <property type="entry name" value="RasGAP_CS"/>
</dbReference>
<dbReference type="InterPro" id="IPR001936">
    <property type="entry name" value="RasGAP_dom"/>
</dbReference>
<dbReference type="InterPro" id="IPR008936">
    <property type="entry name" value="Rho_GTPase_activation_prot"/>
</dbReference>
<dbReference type="InterPro" id="IPR001562">
    <property type="entry name" value="Znf_Btk_motif"/>
</dbReference>
<dbReference type="PANTHER" id="PTHR10194">
    <property type="entry name" value="RAS GTPASE-ACTIVATING PROTEINS"/>
    <property type="match status" value="1"/>
</dbReference>
<dbReference type="PANTHER" id="PTHR10194:SF3">
    <property type="entry name" value="RASGAP-ACTIVATING-LIKE PROTEIN 1"/>
    <property type="match status" value="1"/>
</dbReference>
<dbReference type="Pfam" id="PF00779">
    <property type="entry name" value="BTK"/>
    <property type="match status" value="1"/>
</dbReference>
<dbReference type="Pfam" id="PF00168">
    <property type="entry name" value="C2"/>
    <property type="match status" value="2"/>
</dbReference>
<dbReference type="Pfam" id="PF00169">
    <property type="entry name" value="PH"/>
    <property type="match status" value="1"/>
</dbReference>
<dbReference type="Pfam" id="PF00616">
    <property type="entry name" value="RasGAP"/>
    <property type="match status" value="1"/>
</dbReference>
<dbReference type="SMART" id="SM00107">
    <property type="entry name" value="BTK"/>
    <property type="match status" value="1"/>
</dbReference>
<dbReference type="SMART" id="SM00239">
    <property type="entry name" value="C2"/>
    <property type="match status" value="2"/>
</dbReference>
<dbReference type="SMART" id="SM00233">
    <property type="entry name" value="PH"/>
    <property type="match status" value="1"/>
</dbReference>
<dbReference type="SMART" id="SM00323">
    <property type="entry name" value="RasGAP"/>
    <property type="match status" value="1"/>
</dbReference>
<dbReference type="SUPFAM" id="SSF49562">
    <property type="entry name" value="C2 domain (Calcium/lipid-binding domain, CaLB)"/>
    <property type="match status" value="2"/>
</dbReference>
<dbReference type="SUPFAM" id="SSF48350">
    <property type="entry name" value="GTPase activation domain, GAP"/>
    <property type="match status" value="1"/>
</dbReference>
<dbReference type="SUPFAM" id="SSF50729">
    <property type="entry name" value="PH domain-like"/>
    <property type="match status" value="1"/>
</dbReference>
<dbReference type="PROSITE" id="PS50004">
    <property type="entry name" value="C2"/>
    <property type="match status" value="2"/>
</dbReference>
<dbReference type="PROSITE" id="PS50003">
    <property type="entry name" value="PH_DOMAIN"/>
    <property type="match status" value="1"/>
</dbReference>
<dbReference type="PROSITE" id="PS00509">
    <property type="entry name" value="RAS_GTPASE_ACTIV_1"/>
    <property type="match status" value="1"/>
</dbReference>
<dbReference type="PROSITE" id="PS50018">
    <property type="entry name" value="RAS_GTPASE_ACTIV_2"/>
    <property type="match status" value="1"/>
</dbReference>
<dbReference type="PROSITE" id="PS51113">
    <property type="entry name" value="ZF_BTK"/>
    <property type="match status" value="1"/>
</dbReference>
<proteinExistence type="evidence at protein level"/>
<evidence type="ECO:0000255" key="1">
    <source>
        <dbReference type="PROSITE-ProRule" id="PRU00041"/>
    </source>
</evidence>
<evidence type="ECO:0000255" key="2">
    <source>
        <dbReference type="PROSITE-ProRule" id="PRU00145"/>
    </source>
</evidence>
<evidence type="ECO:0000255" key="3">
    <source>
        <dbReference type="PROSITE-ProRule" id="PRU00167"/>
    </source>
</evidence>
<evidence type="ECO:0000255" key="4">
    <source>
        <dbReference type="PROSITE-ProRule" id="PRU00432"/>
    </source>
</evidence>
<evidence type="ECO:0000269" key="5">
    <source>
    </source>
</evidence>
<evidence type="ECO:0000269" key="6">
    <source>
    </source>
</evidence>
<evidence type="ECO:0000269" key="7">
    <source>
    </source>
</evidence>
<evidence type="ECO:0000269" key="8">
    <source ref="2"/>
</evidence>
<evidence type="ECO:0000303" key="9">
    <source>
    </source>
</evidence>
<evidence type="ECO:0000303" key="10">
    <source>
    </source>
</evidence>
<evidence type="ECO:0000303" key="11">
    <source ref="2"/>
</evidence>
<evidence type="ECO:0000305" key="12"/>
<evidence type="ECO:0000312" key="13">
    <source>
        <dbReference type="HGNC" id="HGNC:9873"/>
    </source>
</evidence>
<sequence>MAKSSSLNVRVVEGRALPAKDVSGSSDPYCLVKVDDEVVARTATVWRSLGPFWGEEYTVHLPLDFHQLAFYVLDEDTVGHDDIIGKISLSREAITADPRGIDSWINLSRVDPDAEVQGEICLSVQMLEDGQGRCLRCHVLQARDLAPRDISGTSDPFARVFWGSQSLETSTIKKTRFPHWDEVLELREMPGAPSPLRVELWDWDMVGKNDFLGMVEFSPKTLQQKPPKGWFRLLPFPRAEEDSGGNLGALRVKVRLIEDRVLPSQCYQPLMELLMESVQGPAEEDTASPLALLEELTLGDCRQDLATKLVKLFLGRGLAGRFLDYLTRREVARTMDPNTLFRSNSLASKSMEQFMKLVGMPYLHEVLKPVISRVFEEKKYMELDPCKMDLGRTRRISFKGALSEEQMRETSLGLLTGYLGPIVDAIVGSVGRCPPAMRLAFKQLHRRVEERFPQAEHQDVKYLAISGFLFLRFFAPAILTPKLFDLRDQHADPQTSRSLLLLAKAVQSIGNLGQQLGQGKELWMAPLHPFLLQCVSRVRDFLDRLVDVDGDEAGVPARALFPPSAIVREGYLLKRKEEPAGLATRFAFKKRYVWLSGETLSFSKSPEWQMCHSIPVSHIRAVERVDEGAFQLPHVMQVVTQDGTGALHTTYLQCKNVNELNQWLSALRKASAPNPNKLAACHPGAFRSARWTCCLQAERSAAGCSRTHSAVTLGDWSDPLDPDAEAQTVYRQLLLGRDQLRLKLLEDSNMDTTLEADTGACPEVLARQRAATARLLEVLADLDRAHEEFQQQERGKAALGPLGP</sequence>
<reference key="1">
    <citation type="journal article" date="1998" name="Gene">
        <title>Restricted tissue expression pattern of a novel human rasGAP-related gene and its murine ortholog.</title>
        <authorList>
            <person name="Allen M."/>
            <person name="Chu S."/>
            <person name="Brill S."/>
            <person name="Stotler C."/>
            <person name="Buckler A."/>
        </authorList>
    </citation>
    <scope>NUCLEOTIDE SEQUENCE [MRNA] (ISOFORM 1)</scope>
    <scope>VARIANT HIS-321</scope>
    <scope>PROBABLE FUNCTION</scope>
    <scope>TISSUE SPECIFICITY</scope>
</reference>
<reference key="2">
    <citation type="submission" date="2005-03" db="EMBL/GenBank/DDBJ databases">
        <authorList>
            <person name="Totoki Y."/>
            <person name="Toyoda A."/>
            <person name="Takeda T."/>
            <person name="Sakaki Y."/>
            <person name="Tanaka A."/>
            <person name="Yokoyama S."/>
            <person name="Ohara O."/>
            <person name="Nagase T."/>
            <person name="Kikuno R.F."/>
        </authorList>
    </citation>
    <scope>NUCLEOTIDE SEQUENCE [LARGE SCALE MRNA] (ISOFORM 3)</scope>
    <scope>VARIANT HIS-321</scope>
    <source>
        <tissue>Brain</tissue>
    </source>
</reference>
<reference key="3">
    <citation type="journal article" date="2006" name="Nature">
        <title>The finished DNA sequence of human chromosome 12.</title>
        <authorList>
            <person name="Scherer S.E."/>
            <person name="Muzny D.M."/>
            <person name="Buhay C.J."/>
            <person name="Chen R."/>
            <person name="Cree A."/>
            <person name="Ding Y."/>
            <person name="Dugan-Rocha S."/>
            <person name="Gill R."/>
            <person name="Gunaratne P."/>
            <person name="Harris R.A."/>
            <person name="Hawes A.C."/>
            <person name="Hernandez J."/>
            <person name="Hodgson A.V."/>
            <person name="Hume J."/>
            <person name="Jackson A."/>
            <person name="Khan Z.M."/>
            <person name="Kovar-Smith C."/>
            <person name="Lewis L.R."/>
            <person name="Lozado R.J."/>
            <person name="Metzker M.L."/>
            <person name="Milosavljevic A."/>
            <person name="Miner G.R."/>
            <person name="Montgomery K.T."/>
            <person name="Morgan M.B."/>
            <person name="Nazareth L.V."/>
            <person name="Scott G."/>
            <person name="Sodergren E."/>
            <person name="Song X.-Z."/>
            <person name="Steffen D."/>
            <person name="Lovering R.C."/>
            <person name="Wheeler D.A."/>
            <person name="Worley K.C."/>
            <person name="Yuan Y."/>
            <person name="Zhang Z."/>
            <person name="Adams C.Q."/>
            <person name="Ansari-Lari M.A."/>
            <person name="Ayele M."/>
            <person name="Brown M.J."/>
            <person name="Chen G."/>
            <person name="Chen Z."/>
            <person name="Clerc-Blankenburg K.P."/>
            <person name="Davis C."/>
            <person name="Delgado O."/>
            <person name="Dinh H.H."/>
            <person name="Draper H."/>
            <person name="Gonzalez-Garay M.L."/>
            <person name="Havlak P."/>
            <person name="Jackson L.R."/>
            <person name="Jacob L.S."/>
            <person name="Kelly S.H."/>
            <person name="Li L."/>
            <person name="Li Z."/>
            <person name="Liu J."/>
            <person name="Liu W."/>
            <person name="Lu J."/>
            <person name="Maheshwari M."/>
            <person name="Nguyen B.-V."/>
            <person name="Okwuonu G.O."/>
            <person name="Pasternak S."/>
            <person name="Perez L.M."/>
            <person name="Plopper F.J.H."/>
            <person name="Santibanez J."/>
            <person name="Shen H."/>
            <person name="Tabor P.E."/>
            <person name="Verduzco D."/>
            <person name="Waldron L."/>
            <person name="Wang Q."/>
            <person name="Williams G.A."/>
            <person name="Zhang J."/>
            <person name="Zhou J."/>
            <person name="Allen C.C."/>
            <person name="Amin A.G."/>
            <person name="Anyalebechi V."/>
            <person name="Bailey M."/>
            <person name="Barbaria J.A."/>
            <person name="Bimage K.E."/>
            <person name="Bryant N.P."/>
            <person name="Burch P.E."/>
            <person name="Burkett C.E."/>
            <person name="Burrell K.L."/>
            <person name="Calderon E."/>
            <person name="Cardenas V."/>
            <person name="Carter K."/>
            <person name="Casias K."/>
            <person name="Cavazos I."/>
            <person name="Cavazos S.R."/>
            <person name="Ceasar H."/>
            <person name="Chacko J."/>
            <person name="Chan S.N."/>
            <person name="Chavez D."/>
            <person name="Christopoulos C."/>
            <person name="Chu J."/>
            <person name="Cockrell R."/>
            <person name="Cox C.D."/>
            <person name="Dang M."/>
            <person name="Dathorne S.R."/>
            <person name="David R."/>
            <person name="Davis C.M."/>
            <person name="Davy-Carroll L."/>
            <person name="Deshazo D.R."/>
            <person name="Donlin J.E."/>
            <person name="D'Souza L."/>
            <person name="Eaves K.A."/>
            <person name="Egan A."/>
            <person name="Emery-Cohen A.J."/>
            <person name="Escotto M."/>
            <person name="Flagg N."/>
            <person name="Forbes L.D."/>
            <person name="Gabisi A.M."/>
            <person name="Garza M."/>
            <person name="Hamilton C."/>
            <person name="Henderson N."/>
            <person name="Hernandez O."/>
            <person name="Hines S."/>
            <person name="Hogues M.E."/>
            <person name="Huang M."/>
            <person name="Idlebird D.G."/>
            <person name="Johnson R."/>
            <person name="Jolivet A."/>
            <person name="Jones S."/>
            <person name="Kagan R."/>
            <person name="King L.M."/>
            <person name="Leal B."/>
            <person name="Lebow H."/>
            <person name="Lee S."/>
            <person name="LeVan J.M."/>
            <person name="Lewis L.C."/>
            <person name="London P."/>
            <person name="Lorensuhewa L.M."/>
            <person name="Loulseged H."/>
            <person name="Lovett D.A."/>
            <person name="Lucier A."/>
            <person name="Lucier R.L."/>
            <person name="Ma J."/>
            <person name="Madu R.C."/>
            <person name="Mapua P."/>
            <person name="Martindale A.D."/>
            <person name="Martinez E."/>
            <person name="Massey E."/>
            <person name="Mawhiney S."/>
            <person name="Meador M.G."/>
            <person name="Mendez S."/>
            <person name="Mercado C."/>
            <person name="Mercado I.C."/>
            <person name="Merritt C.E."/>
            <person name="Miner Z.L."/>
            <person name="Minja E."/>
            <person name="Mitchell T."/>
            <person name="Mohabbat F."/>
            <person name="Mohabbat K."/>
            <person name="Montgomery B."/>
            <person name="Moore N."/>
            <person name="Morris S."/>
            <person name="Munidasa M."/>
            <person name="Ngo R.N."/>
            <person name="Nguyen N.B."/>
            <person name="Nickerson E."/>
            <person name="Nwaokelemeh O.O."/>
            <person name="Nwokenkwo S."/>
            <person name="Obregon M."/>
            <person name="Oguh M."/>
            <person name="Oragunye N."/>
            <person name="Oviedo R.J."/>
            <person name="Parish B.J."/>
            <person name="Parker D.N."/>
            <person name="Parrish J."/>
            <person name="Parks K.L."/>
            <person name="Paul H.A."/>
            <person name="Payton B.A."/>
            <person name="Perez A."/>
            <person name="Perrin W."/>
            <person name="Pickens A."/>
            <person name="Primus E.L."/>
            <person name="Pu L.-L."/>
            <person name="Puazo M."/>
            <person name="Quiles M.M."/>
            <person name="Quiroz J.B."/>
            <person name="Rabata D."/>
            <person name="Reeves K."/>
            <person name="Ruiz S.J."/>
            <person name="Shao H."/>
            <person name="Sisson I."/>
            <person name="Sonaike T."/>
            <person name="Sorelle R.P."/>
            <person name="Sutton A.E."/>
            <person name="Svatek A.F."/>
            <person name="Svetz L.A."/>
            <person name="Tamerisa K.S."/>
            <person name="Taylor T.R."/>
            <person name="Teague B."/>
            <person name="Thomas N."/>
            <person name="Thorn R.D."/>
            <person name="Trejos Z.Y."/>
            <person name="Trevino B.K."/>
            <person name="Ukegbu O.N."/>
            <person name="Urban J.B."/>
            <person name="Vasquez L.I."/>
            <person name="Vera V.A."/>
            <person name="Villasana D.M."/>
            <person name="Wang L."/>
            <person name="Ward-Moore S."/>
            <person name="Warren J.T."/>
            <person name="Wei X."/>
            <person name="White F."/>
            <person name="Williamson A.L."/>
            <person name="Wleczyk R."/>
            <person name="Wooden H.S."/>
            <person name="Wooden S.H."/>
            <person name="Yen J."/>
            <person name="Yoon L."/>
            <person name="Yoon V."/>
            <person name="Zorrilla S.E."/>
            <person name="Nelson D."/>
            <person name="Kucherlapati R."/>
            <person name="Weinstock G."/>
            <person name="Gibbs R.A."/>
        </authorList>
    </citation>
    <scope>NUCLEOTIDE SEQUENCE [LARGE SCALE GENOMIC DNA]</scope>
</reference>
<reference key="4">
    <citation type="journal article" date="2004" name="Genome Res.">
        <title>The status, quality, and expansion of the NIH full-length cDNA project: the Mammalian Gene Collection (MGC).</title>
        <authorList>
            <consortium name="The MGC Project Team"/>
        </authorList>
    </citation>
    <scope>NUCLEOTIDE SEQUENCE [LARGE SCALE MRNA] (ISOFORMS 1/2/4)</scope>
    <scope>VARIANTS LEU-11; MET-58 AND HIS-321</scope>
    <source>
        <tissue>Brain</tissue>
        <tissue>Lung</tissue>
    </source>
</reference>
<reference key="5">
    <citation type="journal article" date="2001" name="Genome Res.">
        <title>Towards a catalog of human genes and proteins: sequencing and analysis of 500 novel complete protein coding human cDNAs.</title>
        <authorList>
            <person name="Wiemann S."/>
            <person name="Weil B."/>
            <person name="Wellenreuther R."/>
            <person name="Gassenhuber J."/>
            <person name="Glassl S."/>
            <person name="Ansorge W."/>
            <person name="Boecher M."/>
            <person name="Bloecker H."/>
            <person name="Bauersachs S."/>
            <person name="Blum H."/>
            <person name="Lauber J."/>
            <person name="Duesterhoeft A."/>
            <person name="Beyer A."/>
            <person name="Koehrer K."/>
            <person name="Strack N."/>
            <person name="Mewes H.-W."/>
            <person name="Ottenwaelder B."/>
            <person name="Obermaier B."/>
            <person name="Tampe J."/>
            <person name="Heubner D."/>
            <person name="Wambutt R."/>
            <person name="Korn B."/>
            <person name="Klein M."/>
            <person name="Poustka A."/>
        </authorList>
    </citation>
    <scope>NUCLEOTIDE SEQUENCE [LARGE SCALE MRNA] OF 1-700 (ISOFORM 4)</scope>
    <source>
        <tissue>Brain</tissue>
    </source>
</reference>
<reference key="6">
    <citation type="journal article" date="2011" name="BMC Syst. Biol.">
        <title>Initial characterization of the human central proteome.</title>
        <authorList>
            <person name="Burkard T.R."/>
            <person name="Planyavsky M."/>
            <person name="Kaupe I."/>
            <person name="Breitwieser F.P."/>
            <person name="Buerckstuemmer T."/>
            <person name="Bennett K.L."/>
            <person name="Superti-Furga G."/>
            <person name="Colinge J."/>
        </authorList>
    </citation>
    <scope>IDENTIFICATION BY MASS SPECTROMETRY [LARGE SCALE ANALYSIS]</scope>
</reference>
<reference key="7">
    <citation type="journal article" date="2013" name="J. Dermatol. Sci.">
        <title>SYT14L, especially its C2 domain, is involved in regulating melanocyte differentiation.</title>
        <authorList>
            <person name="Yoo J.C."/>
            <person name="Lim T.Y."/>
            <person name="Park J.S."/>
            <person name="Hah Y.S."/>
            <person name="Park N."/>
            <person name="Hong S.G."/>
            <person name="Park J.Y."/>
            <person name="Yoon T.J."/>
        </authorList>
    </citation>
    <scope>FUNCTION</scope>
    <scope>TISSUE SPECIFICITY</scope>
</reference>
<organism>
    <name type="scientific">Homo sapiens</name>
    <name type="common">Human</name>
    <dbReference type="NCBI Taxonomy" id="9606"/>
    <lineage>
        <taxon>Eukaryota</taxon>
        <taxon>Metazoa</taxon>
        <taxon>Chordata</taxon>
        <taxon>Craniata</taxon>
        <taxon>Vertebrata</taxon>
        <taxon>Euteleostomi</taxon>
        <taxon>Mammalia</taxon>
        <taxon>Eutheria</taxon>
        <taxon>Euarchontoglires</taxon>
        <taxon>Primates</taxon>
        <taxon>Haplorrhini</taxon>
        <taxon>Catarrhini</taxon>
        <taxon>Hominidae</taxon>
        <taxon>Homo</taxon>
    </lineage>
</organism>
<feature type="chain" id="PRO_0000056645" description="RasGAP-activating-like protein 1">
    <location>
        <begin position="1"/>
        <end position="804"/>
    </location>
</feature>
<feature type="domain" description="C2 1" evidence="1">
    <location>
        <begin position="1"/>
        <end position="105"/>
    </location>
</feature>
<feature type="domain" description="C2 2" evidence="1">
    <location>
        <begin position="116"/>
        <end position="231"/>
    </location>
</feature>
<feature type="domain" description="Ras-GAP" evidence="3">
    <location>
        <begin position="317"/>
        <end position="545"/>
    </location>
</feature>
<feature type="domain" description="PH" evidence="2">
    <location>
        <begin position="565"/>
        <end position="672"/>
    </location>
</feature>
<feature type="zinc finger region" description="Btk-type" evidence="4">
    <location>
        <begin position="674"/>
        <end position="710"/>
    </location>
</feature>
<feature type="binding site" evidence="1">
    <location>
        <position position="21"/>
    </location>
    <ligand>
        <name>Ca(2+)</name>
        <dbReference type="ChEBI" id="CHEBI:29108"/>
        <label>1</label>
    </ligand>
</feature>
<feature type="binding site" evidence="1">
    <location>
        <position position="21"/>
    </location>
    <ligand>
        <name>Ca(2+)</name>
        <dbReference type="ChEBI" id="CHEBI:29108"/>
        <label>2</label>
    </ligand>
</feature>
<feature type="binding site" evidence="1">
    <location>
        <position position="27"/>
    </location>
    <ligand>
        <name>Ca(2+)</name>
        <dbReference type="ChEBI" id="CHEBI:29108"/>
        <label>1</label>
    </ligand>
</feature>
<feature type="binding site" evidence="1">
    <location>
        <position position="74"/>
    </location>
    <ligand>
        <name>Ca(2+)</name>
        <dbReference type="ChEBI" id="CHEBI:29108"/>
        <label>1</label>
    </ligand>
</feature>
<feature type="binding site" evidence="1">
    <location>
        <position position="74"/>
    </location>
    <ligand>
        <name>Ca(2+)</name>
        <dbReference type="ChEBI" id="CHEBI:29108"/>
        <label>2</label>
    </ligand>
</feature>
<feature type="binding site" evidence="1">
    <location>
        <position position="76"/>
    </location>
    <ligand>
        <name>Ca(2+)</name>
        <dbReference type="ChEBI" id="CHEBI:29108"/>
        <label>1</label>
    </ligand>
</feature>
<feature type="binding site" evidence="1">
    <location>
        <position position="76"/>
    </location>
    <ligand>
        <name>Ca(2+)</name>
        <dbReference type="ChEBI" id="CHEBI:29108"/>
        <label>2</label>
    </ligand>
</feature>
<feature type="binding site" evidence="1">
    <location>
        <position position="82"/>
    </location>
    <ligand>
        <name>Ca(2+)</name>
        <dbReference type="ChEBI" id="CHEBI:29108"/>
        <label>2</label>
    </ligand>
</feature>
<feature type="binding site" evidence="1">
    <location>
        <position position="149"/>
    </location>
    <ligand>
        <name>Ca(2+)</name>
        <dbReference type="ChEBI" id="CHEBI:29108"/>
        <label>3</label>
    </ligand>
</feature>
<feature type="binding site" evidence="1">
    <location>
        <position position="149"/>
    </location>
    <ligand>
        <name>Ca(2+)</name>
        <dbReference type="ChEBI" id="CHEBI:29108"/>
        <label>4</label>
    </ligand>
</feature>
<feature type="binding site" evidence="1">
    <location>
        <position position="155"/>
    </location>
    <ligand>
        <name>Ca(2+)</name>
        <dbReference type="ChEBI" id="CHEBI:29108"/>
        <label>3</label>
    </ligand>
</feature>
<feature type="binding site" evidence="1">
    <location>
        <position position="202"/>
    </location>
    <ligand>
        <name>Ca(2+)</name>
        <dbReference type="ChEBI" id="CHEBI:29108"/>
        <label>3</label>
    </ligand>
</feature>
<feature type="binding site" evidence="1">
    <location>
        <position position="202"/>
    </location>
    <ligand>
        <name>Ca(2+)</name>
        <dbReference type="ChEBI" id="CHEBI:29108"/>
        <label>4</label>
    </ligand>
</feature>
<feature type="binding site" evidence="1">
    <location>
        <position position="204"/>
    </location>
    <ligand>
        <name>Ca(2+)</name>
        <dbReference type="ChEBI" id="CHEBI:29108"/>
        <label>3</label>
    </ligand>
</feature>
<feature type="binding site" evidence="1">
    <location>
        <position position="204"/>
    </location>
    <ligand>
        <name>Ca(2+)</name>
        <dbReference type="ChEBI" id="CHEBI:29108"/>
        <label>4</label>
    </ligand>
</feature>
<feature type="binding site" evidence="1">
    <location>
        <position position="210"/>
    </location>
    <ligand>
        <name>Ca(2+)</name>
        <dbReference type="ChEBI" id="CHEBI:29108"/>
        <label>4</label>
    </ligand>
</feature>
<feature type="binding site" evidence="4">
    <location>
        <position position="682"/>
    </location>
    <ligand>
        <name>Zn(2+)</name>
        <dbReference type="ChEBI" id="CHEBI:29105"/>
    </ligand>
</feature>
<feature type="binding site" evidence="4">
    <location>
        <position position="693"/>
    </location>
    <ligand>
        <name>Zn(2+)</name>
        <dbReference type="ChEBI" id="CHEBI:29105"/>
    </ligand>
</feature>
<feature type="binding site" evidence="4">
    <location>
        <position position="694"/>
    </location>
    <ligand>
        <name>Zn(2+)</name>
        <dbReference type="ChEBI" id="CHEBI:29105"/>
    </ligand>
</feature>
<feature type="binding site" evidence="4">
    <location>
        <position position="704"/>
    </location>
    <ligand>
        <name>Zn(2+)</name>
        <dbReference type="ChEBI" id="CHEBI:29105"/>
    </ligand>
</feature>
<feature type="site" description="Arginine finger; crucial for GTP hydrolysis by stabilizing the transition state" evidence="3">
    <location>
        <position position="342"/>
    </location>
</feature>
<feature type="splice variant" id="VSP_047005" description="In isoform 3." evidence="11">
    <original>Q</original>
    <variation>QQ</variation>
    <location>
        <position position="458"/>
    </location>
</feature>
<feature type="splice variant" id="VSP_047006" description="In isoform 3 and isoform 4." evidence="9 11">
    <original>E</original>
    <variation>EE</variation>
    <location>
        <position position="552"/>
    </location>
</feature>
<feature type="splice variant" id="VSP_001627" description="In isoform 2." evidence="12">
    <location>
        <begin position="610"/>
        <end position="637"/>
    </location>
</feature>
<feature type="sequence variant" id="VAR_031665" description="In dbSNP:rs7960087." evidence="5">
    <original>V</original>
    <variation>L</variation>
    <location>
        <position position="11"/>
    </location>
</feature>
<feature type="sequence variant" id="VAR_031666" description="In dbSNP:rs34598602." evidence="5">
    <original>T</original>
    <variation>M</variation>
    <location>
        <position position="58"/>
    </location>
</feature>
<feature type="sequence variant" id="VAR_031667" description="In dbSNP:rs1284879." evidence="5 7 8">
    <original>R</original>
    <variation>H</variation>
    <location>
        <position position="321"/>
    </location>
</feature>
<feature type="sequence conflict" description="In Ref. 1; AAD09006." evidence="12" ref="1">
    <original>Q</original>
    <variation>H</variation>
    <location>
        <position position="141"/>
    </location>
</feature>
<feature type="sequence conflict" description="In Ref. 5; CAB66607." evidence="12" ref="5">
    <original>L</original>
    <variation>P</variation>
    <location>
        <position position="346"/>
    </location>
</feature>
<feature type="sequence conflict" description="In Ref. 5; CAB66607." evidence="12" ref="5">
    <original>Q</original>
    <variation>R</variation>
    <location>
        <position position="514"/>
    </location>
</feature>
<accession>O95294</accession>
<accession>B7ZKM4</accession>
<accession>C9JFK5</accession>
<accession>F8VQX1</accession>
<accession>Q52M03</accession>
<accession>Q59H24</accession>
<accession>Q96CC7</accession>
<protein>
    <recommendedName>
        <fullName evidence="12">RasGAP-activating-like protein 1</fullName>
    </recommendedName>
    <alternativeName>
        <fullName evidence="13">RAS protein activator like 1</fullName>
    </alternativeName>
    <alternativeName>
        <fullName evidence="10">Ras GTPase-activating-like protein</fullName>
    </alternativeName>
</protein>
<keyword id="KW-0025">Alternative splicing</keyword>
<keyword id="KW-0106">Calcium</keyword>
<keyword id="KW-0221">Differentiation</keyword>
<keyword id="KW-0343">GTPase activation</keyword>
<keyword id="KW-0479">Metal-binding</keyword>
<keyword id="KW-1267">Proteomics identification</keyword>
<keyword id="KW-1185">Reference proteome</keyword>
<keyword id="KW-0677">Repeat</keyword>
<keyword id="KW-0862">Zinc</keyword>
<keyword id="KW-0863">Zinc-finger</keyword>
<name>RASL1_HUMAN</name>